<comment type="similarity">
    <text evidence="1">Belongs to the elongation factor P family.</text>
</comment>
<dbReference type="EMBL" id="AM286690">
    <property type="protein sequence ID" value="CAL16132.1"/>
    <property type="molecule type" value="Genomic_DNA"/>
</dbReference>
<dbReference type="SMR" id="Q0VRR6"/>
<dbReference type="STRING" id="393595.ABO_0684"/>
<dbReference type="KEGG" id="abo:ABO_0684"/>
<dbReference type="eggNOG" id="COG0231">
    <property type="taxonomic scope" value="Bacteria"/>
</dbReference>
<dbReference type="HOGENOM" id="CLU_074944_2_0_6"/>
<dbReference type="OrthoDB" id="5599402at2"/>
<dbReference type="Proteomes" id="UP000008871">
    <property type="component" value="Chromosome"/>
</dbReference>
<dbReference type="GO" id="GO:0005737">
    <property type="term" value="C:cytoplasm"/>
    <property type="evidence" value="ECO:0007669"/>
    <property type="project" value="InterPro"/>
</dbReference>
<dbReference type="GO" id="GO:0003746">
    <property type="term" value="F:translation elongation factor activity"/>
    <property type="evidence" value="ECO:0007669"/>
    <property type="project" value="UniProtKB-UniRule"/>
</dbReference>
<dbReference type="GO" id="GO:0043043">
    <property type="term" value="P:peptide biosynthetic process"/>
    <property type="evidence" value="ECO:0007669"/>
    <property type="project" value="InterPro"/>
</dbReference>
<dbReference type="CDD" id="cd04470">
    <property type="entry name" value="S1_EF-P_repeat_1"/>
    <property type="match status" value="1"/>
</dbReference>
<dbReference type="CDD" id="cd05794">
    <property type="entry name" value="S1_EF-P_repeat_2"/>
    <property type="match status" value="1"/>
</dbReference>
<dbReference type="FunFam" id="2.40.50.140:FF:000004">
    <property type="entry name" value="Elongation factor P"/>
    <property type="match status" value="1"/>
</dbReference>
<dbReference type="Gene3D" id="2.30.30.30">
    <property type="match status" value="1"/>
</dbReference>
<dbReference type="Gene3D" id="2.40.50.140">
    <property type="entry name" value="Nucleic acid-binding proteins"/>
    <property type="match status" value="2"/>
</dbReference>
<dbReference type="HAMAP" id="MF_00646">
    <property type="entry name" value="EFP"/>
    <property type="match status" value="1"/>
</dbReference>
<dbReference type="InterPro" id="IPR015365">
    <property type="entry name" value="Elong-fact-P_C"/>
</dbReference>
<dbReference type="InterPro" id="IPR012340">
    <property type="entry name" value="NA-bd_OB-fold"/>
</dbReference>
<dbReference type="InterPro" id="IPR014722">
    <property type="entry name" value="Rib_uL2_dom2"/>
</dbReference>
<dbReference type="InterPro" id="IPR020599">
    <property type="entry name" value="Transl_elong_fac_P/YeiP"/>
</dbReference>
<dbReference type="InterPro" id="IPR013185">
    <property type="entry name" value="Transl_elong_KOW-like"/>
</dbReference>
<dbReference type="InterPro" id="IPR011897">
    <property type="entry name" value="Transl_elong_p-like_YeiP"/>
</dbReference>
<dbReference type="InterPro" id="IPR001059">
    <property type="entry name" value="Transl_elong_P/YeiP_cen"/>
</dbReference>
<dbReference type="InterPro" id="IPR013852">
    <property type="entry name" value="Transl_elong_P/YeiP_CS"/>
</dbReference>
<dbReference type="InterPro" id="IPR008991">
    <property type="entry name" value="Translation_prot_SH3-like_sf"/>
</dbReference>
<dbReference type="NCBIfam" id="NF001810">
    <property type="entry name" value="PRK00529.1"/>
    <property type="match status" value="1"/>
</dbReference>
<dbReference type="NCBIfam" id="NF003392">
    <property type="entry name" value="PRK04542.1"/>
    <property type="match status" value="1"/>
</dbReference>
<dbReference type="PANTHER" id="PTHR30053">
    <property type="entry name" value="ELONGATION FACTOR P"/>
    <property type="match status" value="1"/>
</dbReference>
<dbReference type="PANTHER" id="PTHR30053:SF14">
    <property type="entry name" value="TRANSLATION ELONGATION FACTOR KOW-LIKE DOMAIN-CONTAINING PROTEIN"/>
    <property type="match status" value="1"/>
</dbReference>
<dbReference type="Pfam" id="PF01132">
    <property type="entry name" value="EFP"/>
    <property type="match status" value="1"/>
</dbReference>
<dbReference type="Pfam" id="PF08207">
    <property type="entry name" value="EFP_N"/>
    <property type="match status" value="1"/>
</dbReference>
<dbReference type="Pfam" id="PF09285">
    <property type="entry name" value="Elong-fact-P_C"/>
    <property type="match status" value="1"/>
</dbReference>
<dbReference type="PIRSF" id="PIRSF005901">
    <property type="entry name" value="EF-P"/>
    <property type="match status" value="1"/>
</dbReference>
<dbReference type="SMART" id="SM01185">
    <property type="entry name" value="EFP"/>
    <property type="match status" value="1"/>
</dbReference>
<dbReference type="SMART" id="SM00841">
    <property type="entry name" value="Elong-fact-P_C"/>
    <property type="match status" value="1"/>
</dbReference>
<dbReference type="SUPFAM" id="SSF50249">
    <property type="entry name" value="Nucleic acid-binding proteins"/>
    <property type="match status" value="2"/>
</dbReference>
<dbReference type="SUPFAM" id="SSF50104">
    <property type="entry name" value="Translation proteins SH3-like domain"/>
    <property type="match status" value="1"/>
</dbReference>
<dbReference type="PROSITE" id="PS01275">
    <property type="entry name" value="EFP"/>
    <property type="match status" value="1"/>
</dbReference>
<protein>
    <recommendedName>
        <fullName evidence="1">Elongation factor P-like protein</fullName>
    </recommendedName>
</protein>
<organism>
    <name type="scientific">Alcanivorax borkumensis (strain ATCC 700651 / DSM 11573 / NCIMB 13689 / SK2)</name>
    <dbReference type="NCBI Taxonomy" id="393595"/>
    <lineage>
        <taxon>Bacteria</taxon>
        <taxon>Pseudomonadati</taxon>
        <taxon>Pseudomonadota</taxon>
        <taxon>Gammaproteobacteria</taxon>
        <taxon>Oceanospirillales</taxon>
        <taxon>Alcanivoracaceae</taxon>
        <taxon>Alcanivorax</taxon>
    </lineage>
</organism>
<reference key="1">
    <citation type="journal article" date="2006" name="Nat. Biotechnol.">
        <title>Genome sequence of the ubiquitous hydrocarbon-degrading marine bacterium Alcanivorax borkumensis.</title>
        <authorList>
            <person name="Schneiker S."/>
            <person name="Martins dos Santos V.A.P."/>
            <person name="Bartels D."/>
            <person name="Bekel T."/>
            <person name="Brecht M."/>
            <person name="Buhrmester J."/>
            <person name="Chernikova T.N."/>
            <person name="Denaro R."/>
            <person name="Ferrer M."/>
            <person name="Gertler C."/>
            <person name="Goesmann A."/>
            <person name="Golyshina O.V."/>
            <person name="Kaminski F."/>
            <person name="Khachane A.N."/>
            <person name="Lang S."/>
            <person name="Linke B."/>
            <person name="McHardy A.C."/>
            <person name="Meyer F."/>
            <person name="Nechitaylo T."/>
            <person name="Puehler A."/>
            <person name="Regenhardt D."/>
            <person name="Rupp O."/>
            <person name="Sabirova J.S."/>
            <person name="Selbitschka W."/>
            <person name="Yakimov M.M."/>
            <person name="Timmis K.N."/>
            <person name="Vorhoelter F.-J."/>
            <person name="Weidner S."/>
            <person name="Kaiser O."/>
            <person name="Golyshin P.N."/>
        </authorList>
    </citation>
    <scope>NUCLEOTIDE SEQUENCE [LARGE SCALE GENOMIC DNA]</scope>
    <source>
        <strain>ATCC 700651 / DSM 11573 / NCIMB 13689 / SK2</strain>
    </source>
</reference>
<proteinExistence type="inferred from homology"/>
<feature type="chain" id="PRO_0000384906" description="Elongation factor P-like protein">
    <location>
        <begin position="1"/>
        <end position="188"/>
    </location>
</feature>
<evidence type="ECO:0000255" key="1">
    <source>
        <dbReference type="HAMAP-Rule" id="MF_00646"/>
    </source>
</evidence>
<accession>Q0VRR6</accession>
<keyword id="KW-1185">Reference proteome</keyword>
<sequence length="188" mass="20600">MTRASELKKSDVIEVNGTLYAIRQIEVQSPSARGAATLYRVKASAVGGGPKFEERFKGDDDVATVALQRRAVQFSYVDGDDYIFMDNEDFSQYLLKQDDIRDELAFITEETQGVLALKVEESVIGLELPASVVLDVTETTPAMKAASSSARTKPATLNTGLVVQVPEYIVAGEKVRVNTAERKFMSRA</sequence>
<gene>
    <name type="ordered locus">ABO_0684</name>
</gene>
<name>EFPL_ALCBS</name>